<keyword id="KW-0687">Ribonucleoprotein</keyword>
<keyword id="KW-0689">Ribosomal protein</keyword>
<keyword id="KW-0694">RNA-binding</keyword>
<keyword id="KW-0699">rRNA-binding</keyword>
<name>RS6_STRPZ</name>
<comment type="function">
    <text evidence="1">Binds together with bS18 to 16S ribosomal RNA.</text>
</comment>
<comment type="similarity">
    <text evidence="1">Belongs to the bacterial ribosomal protein bS6 family.</text>
</comment>
<reference key="1">
    <citation type="journal article" date="2008" name="J. Bacteriol.">
        <title>Genome sequence of a nephritogenic and highly transformable M49 strain of Streptococcus pyogenes.</title>
        <authorList>
            <person name="McShan W.M."/>
            <person name="Ferretti J.J."/>
            <person name="Karasawa T."/>
            <person name="Suvorov A.N."/>
            <person name="Lin S."/>
            <person name="Qin B."/>
            <person name="Jia H."/>
            <person name="Kenton S."/>
            <person name="Najar F."/>
            <person name="Wu H."/>
            <person name="Scott J."/>
            <person name="Roe B.A."/>
            <person name="Savic D.J."/>
        </authorList>
    </citation>
    <scope>NUCLEOTIDE SEQUENCE [LARGE SCALE GENOMIC DNA]</scope>
    <source>
        <strain>NZ131</strain>
    </source>
</reference>
<proteinExistence type="inferred from homology"/>
<feature type="chain" id="PRO_1000120813" description="Small ribosomal subunit protein bS6">
    <location>
        <begin position="1"/>
        <end position="96"/>
    </location>
</feature>
<gene>
    <name evidence="1" type="primary">rpsF</name>
    <name type="ordered locus">Spy49_1428c</name>
</gene>
<evidence type="ECO:0000255" key="1">
    <source>
        <dbReference type="HAMAP-Rule" id="MF_00360"/>
    </source>
</evidence>
<evidence type="ECO:0000305" key="2"/>
<organism>
    <name type="scientific">Streptococcus pyogenes serotype M49 (strain NZ131)</name>
    <dbReference type="NCBI Taxonomy" id="471876"/>
    <lineage>
        <taxon>Bacteria</taxon>
        <taxon>Bacillati</taxon>
        <taxon>Bacillota</taxon>
        <taxon>Bacilli</taxon>
        <taxon>Lactobacillales</taxon>
        <taxon>Streptococcaceae</taxon>
        <taxon>Streptococcus</taxon>
    </lineage>
</organism>
<dbReference type="EMBL" id="CP000829">
    <property type="protein sequence ID" value="ACI61702.1"/>
    <property type="molecule type" value="Genomic_DNA"/>
</dbReference>
<dbReference type="SMR" id="B5XI40"/>
<dbReference type="KEGG" id="soz:Spy49_1428c"/>
<dbReference type="HOGENOM" id="CLU_113441_5_3_9"/>
<dbReference type="Proteomes" id="UP000001039">
    <property type="component" value="Chromosome"/>
</dbReference>
<dbReference type="GO" id="GO:0005737">
    <property type="term" value="C:cytoplasm"/>
    <property type="evidence" value="ECO:0007669"/>
    <property type="project" value="UniProtKB-ARBA"/>
</dbReference>
<dbReference type="GO" id="GO:1990904">
    <property type="term" value="C:ribonucleoprotein complex"/>
    <property type="evidence" value="ECO:0007669"/>
    <property type="project" value="UniProtKB-KW"/>
</dbReference>
<dbReference type="GO" id="GO:0005840">
    <property type="term" value="C:ribosome"/>
    <property type="evidence" value="ECO:0007669"/>
    <property type="project" value="UniProtKB-KW"/>
</dbReference>
<dbReference type="GO" id="GO:0070181">
    <property type="term" value="F:small ribosomal subunit rRNA binding"/>
    <property type="evidence" value="ECO:0007669"/>
    <property type="project" value="TreeGrafter"/>
</dbReference>
<dbReference type="GO" id="GO:0003735">
    <property type="term" value="F:structural constituent of ribosome"/>
    <property type="evidence" value="ECO:0007669"/>
    <property type="project" value="InterPro"/>
</dbReference>
<dbReference type="GO" id="GO:0006412">
    <property type="term" value="P:translation"/>
    <property type="evidence" value="ECO:0007669"/>
    <property type="project" value="UniProtKB-UniRule"/>
</dbReference>
<dbReference type="CDD" id="cd00473">
    <property type="entry name" value="bS6"/>
    <property type="match status" value="1"/>
</dbReference>
<dbReference type="FunFam" id="3.30.70.60:FF:000002">
    <property type="entry name" value="30S ribosomal protein S6"/>
    <property type="match status" value="1"/>
</dbReference>
<dbReference type="Gene3D" id="3.30.70.60">
    <property type="match status" value="1"/>
</dbReference>
<dbReference type="HAMAP" id="MF_00360">
    <property type="entry name" value="Ribosomal_bS6"/>
    <property type="match status" value="1"/>
</dbReference>
<dbReference type="InterPro" id="IPR000529">
    <property type="entry name" value="Ribosomal_bS6"/>
</dbReference>
<dbReference type="InterPro" id="IPR035980">
    <property type="entry name" value="Ribosomal_bS6_sf"/>
</dbReference>
<dbReference type="InterPro" id="IPR020814">
    <property type="entry name" value="Ribosomal_S6_plastid/chlpt"/>
</dbReference>
<dbReference type="InterPro" id="IPR014717">
    <property type="entry name" value="Transl_elong_EF1B/ribsomal_bS6"/>
</dbReference>
<dbReference type="NCBIfam" id="TIGR00166">
    <property type="entry name" value="S6"/>
    <property type="match status" value="1"/>
</dbReference>
<dbReference type="PANTHER" id="PTHR21011">
    <property type="entry name" value="MITOCHONDRIAL 28S RIBOSOMAL PROTEIN S6"/>
    <property type="match status" value="1"/>
</dbReference>
<dbReference type="PANTHER" id="PTHR21011:SF1">
    <property type="entry name" value="SMALL RIBOSOMAL SUBUNIT PROTEIN BS6M"/>
    <property type="match status" value="1"/>
</dbReference>
<dbReference type="Pfam" id="PF01250">
    <property type="entry name" value="Ribosomal_S6"/>
    <property type="match status" value="1"/>
</dbReference>
<dbReference type="SUPFAM" id="SSF54995">
    <property type="entry name" value="Ribosomal protein S6"/>
    <property type="match status" value="1"/>
</dbReference>
<protein>
    <recommendedName>
        <fullName evidence="1">Small ribosomal subunit protein bS6</fullName>
    </recommendedName>
    <alternativeName>
        <fullName evidence="2">30S ribosomal protein S6</fullName>
    </alternativeName>
</protein>
<accession>B5XI40</accession>
<sequence length="96" mass="11082">MAKYEILYIIRPNIEEEAKNALVARFDSILTDNGATVVESKDWEKRRLAYEINDFREGLYHIVNLEATDAAALNEFDRLSKINGDILRHMIVKLDA</sequence>